<feature type="signal peptide" evidence="2">
    <location>
        <begin position="1"/>
        <end position="20"/>
    </location>
</feature>
<feature type="propeptide" id="PRO_0000401511" evidence="1">
    <location>
        <begin position="21"/>
        <end position="41"/>
    </location>
</feature>
<feature type="chain" id="PRO_0000401512" description="U1-lycotoxin-Ls1e">
    <location>
        <begin position="42"/>
        <end position="107"/>
    </location>
</feature>
<feature type="disulfide bond" evidence="1">
    <location>
        <begin position="44"/>
        <end position="59"/>
    </location>
</feature>
<feature type="disulfide bond" evidence="1">
    <location>
        <begin position="51"/>
        <end position="68"/>
    </location>
</feature>
<feature type="disulfide bond" evidence="1">
    <location>
        <begin position="58"/>
        <end position="86"/>
    </location>
</feature>
<feature type="disulfide bond" evidence="1">
    <location>
        <begin position="70"/>
        <end position="84"/>
    </location>
</feature>
<reference key="1">
    <citation type="journal article" date="2010" name="Zoology">
        <title>Transcriptome analysis of the venom glands of the Chinese wolf spider Lycosa singoriensis.</title>
        <authorList>
            <person name="Zhang Y."/>
            <person name="Chen J."/>
            <person name="Tang X."/>
            <person name="Wang F."/>
            <person name="Jiang L."/>
            <person name="Xiong X."/>
            <person name="Wang M."/>
            <person name="Rong M."/>
            <person name="Liu Z."/>
            <person name="Liang S."/>
        </authorList>
    </citation>
    <scope>NUCLEOTIDE SEQUENCE [LARGE SCALE MRNA]</scope>
    <source>
        <tissue>Venom gland</tissue>
    </source>
</reference>
<organism>
    <name type="scientific">Lycosa singoriensis</name>
    <name type="common">Wolf spider</name>
    <name type="synonym">Aranea singoriensis</name>
    <dbReference type="NCBI Taxonomy" id="434756"/>
    <lineage>
        <taxon>Eukaryota</taxon>
        <taxon>Metazoa</taxon>
        <taxon>Ecdysozoa</taxon>
        <taxon>Arthropoda</taxon>
        <taxon>Chelicerata</taxon>
        <taxon>Arachnida</taxon>
        <taxon>Araneae</taxon>
        <taxon>Araneomorphae</taxon>
        <taxon>Entelegynae</taxon>
        <taxon>Lycosoidea</taxon>
        <taxon>Lycosidae</taxon>
        <taxon>Lycosa</taxon>
    </lineage>
</organism>
<keyword id="KW-1015">Disulfide bond</keyword>
<keyword id="KW-0960">Knottin</keyword>
<keyword id="KW-0964">Secreted</keyword>
<keyword id="KW-0732">Signal</keyword>
<keyword id="KW-0800">Toxin</keyword>
<comment type="subcellular location">
    <subcellularLocation>
        <location evidence="1">Secreted</location>
    </subcellularLocation>
</comment>
<comment type="tissue specificity">
    <text>Expressed by the venom gland.</text>
</comment>
<comment type="domain">
    <text evidence="1">The presence of a 'disulfide through disulfide knot' structurally defines this protein as a knottin.</text>
</comment>
<comment type="similarity">
    <text evidence="3">Belongs to the neurotoxin 19 (CSTX) family. 04 (U1-Lctx) subfamily.</text>
</comment>
<comment type="sequence caution" evidence="3">
    <conflict type="frameshift">
        <sequence resource="EMBL-CDS" id="ACI41261"/>
    </conflict>
</comment>
<sequence length="107" mass="11962">MMKVLVVFALLVTLISYSSSEGIDDLEADELLSLMANEQTRKECIPKHHECTSNKHGCCRGNFFKYKCQCTTVVTQDGEQTERCFCGTPPHHKAAELMVGFGKKIFG</sequence>
<protein>
    <recommendedName>
        <fullName>U1-lycotoxin-Ls1e</fullName>
    </recommendedName>
    <alternativeName>
        <fullName>Toxin-like structure LSTX-A6</fullName>
    </alternativeName>
</protein>
<evidence type="ECO:0000250" key="1"/>
<evidence type="ECO:0000255" key="2"/>
<evidence type="ECO:0000305" key="3"/>
<dbReference type="EMBL" id="EU925929">
    <property type="protein sequence ID" value="ACI41261.1"/>
    <property type="status" value="ALT_FRAME"/>
    <property type="molecule type" value="mRNA"/>
</dbReference>
<dbReference type="SMR" id="B6DCJ5"/>
<dbReference type="ArachnoServer" id="AS000879">
    <property type="toxin name" value="U1-lycotoxin-Ls1e"/>
</dbReference>
<dbReference type="GO" id="GO:0005576">
    <property type="term" value="C:extracellular region"/>
    <property type="evidence" value="ECO:0007669"/>
    <property type="project" value="UniProtKB-SubCell"/>
</dbReference>
<dbReference type="GO" id="GO:0090729">
    <property type="term" value="F:toxin activity"/>
    <property type="evidence" value="ECO:0007669"/>
    <property type="project" value="UniProtKB-KW"/>
</dbReference>
<dbReference type="InterPro" id="IPR019553">
    <property type="entry name" value="Spider_toxin_CSTX_knottin"/>
</dbReference>
<dbReference type="InterPro" id="IPR011142">
    <property type="entry name" value="Spider_toxin_CSTX_Knottin_CS"/>
</dbReference>
<dbReference type="Pfam" id="PF10530">
    <property type="entry name" value="Toxin_35"/>
    <property type="match status" value="1"/>
</dbReference>
<dbReference type="PROSITE" id="PS60029">
    <property type="entry name" value="SPIDER_CSTX"/>
    <property type="match status" value="1"/>
</dbReference>
<proteinExistence type="evidence at transcript level"/>
<name>TX106_LYCSI</name>
<accession>B6DCJ5</accession>